<comment type="function">
    <text evidence="2 3 4">Thiol-specific peroxidase that catalyzes the reduction of hydrogen peroxide and organic hydroperoxides to water and alcohols, respectively. Plays a role in cell protection against oxidative stress by detoxifying peroxides.</text>
</comment>
<comment type="catalytic activity">
    <reaction evidence="2 3 4">
        <text>a hydroperoxide + [thioredoxin]-dithiol = an alcohol + [thioredoxin]-disulfide + H2O</text>
        <dbReference type="Rhea" id="RHEA:62620"/>
        <dbReference type="Rhea" id="RHEA-COMP:10698"/>
        <dbReference type="Rhea" id="RHEA-COMP:10700"/>
        <dbReference type="ChEBI" id="CHEBI:15377"/>
        <dbReference type="ChEBI" id="CHEBI:29950"/>
        <dbReference type="ChEBI" id="CHEBI:30879"/>
        <dbReference type="ChEBI" id="CHEBI:35924"/>
        <dbReference type="ChEBI" id="CHEBI:50058"/>
        <dbReference type="EC" id="1.11.1.24"/>
    </reaction>
</comment>
<comment type="biophysicochemical properties">
    <phDependence>
        <text evidence="4">Optimum pH is 4.8.</text>
    </phDependence>
    <temperatureDependence>
        <text evidence="4">Thermostable. Retains full activity after 20 minutes at 90 degrees Celsius and 75 % of its initial activity after 20 minutes at 100 degrees Celsius.</text>
    </temperatureDependence>
</comment>
<comment type="subunit">
    <text evidence="2 5">Homodecamer. Pentamer of dimers that assemble into a ring structure.</text>
</comment>
<comment type="subcellular location">
    <subcellularLocation>
        <location evidence="2">Cytoplasm</location>
    </subcellularLocation>
</comment>
<comment type="induction">
    <text evidence="3 4">Up-regulated by exposure to oxygen (at protein level).</text>
</comment>
<comment type="miscellaneous">
    <text evidence="1 2">The active site is a conserved redox-active cysteine residue, the peroxidatic cysteine (C(P)), which makes the nucleophilic attack on the peroxide substrate. The peroxide oxidizes the C(P)-SH to cysteine sulfenic acid (C(P)-SOH), which then reacts with another cysteine residue, the resolving cysteine (C(R)), to form a disulfide bridge. The disulfide is subsequently reduced by an appropriate electron donor to complete the catalytic cycle. Although the primary sequence of this enzyme is similar to those of the 1-Cys Prx6 enzymes, its catalytic properties resemble those of the typical 2-Cys Prxs and C(R) is provided by the other dimeric subunit to form an intersubunit disulfide. The disulfide is subsequently reduced by thioredoxin.</text>
</comment>
<comment type="similarity">
    <text evidence="2">Belongs to the peroxiredoxin family. Prx6 subfamily.</text>
</comment>
<evidence type="ECO:0000250" key="1">
    <source>
        <dbReference type="UniProtKB" id="Q9Y9L0"/>
    </source>
</evidence>
<evidence type="ECO:0000255" key="2">
    <source>
        <dbReference type="HAMAP-Rule" id="MF_00401"/>
    </source>
</evidence>
<evidence type="ECO:0000269" key="3">
    <source>
    </source>
</evidence>
<evidence type="ECO:0000269" key="4">
    <source>
    </source>
</evidence>
<evidence type="ECO:0000269" key="5">
    <source>
    </source>
</evidence>
<evidence type="ECO:0007829" key="6">
    <source>
        <dbReference type="PDB" id="3W6G"/>
    </source>
</evidence>
<evidence type="ECO:0007829" key="7">
    <source>
        <dbReference type="PDB" id="5XBQ"/>
    </source>
</evidence>
<evidence type="ECO:0007829" key="8">
    <source>
        <dbReference type="PDB" id="5XBR"/>
    </source>
</evidence>
<reference key="1">
    <citation type="journal article" date="1998" name="DNA Res.">
        <title>Complete sequence and gene organization of the genome of a hyper-thermophilic archaebacterium, Pyrococcus horikoshii OT3.</title>
        <authorList>
            <person name="Kawarabayasi Y."/>
            <person name="Sawada M."/>
            <person name="Horikawa H."/>
            <person name="Haikawa Y."/>
            <person name="Hino Y."/>
            <person name="Yamamoto S."/>
            <person name="Sekine M."/>
            <person name="Baba S."/>
            <person name="Kosugi H."/>
            <person name="Hosoyama A."/>
            <person name="Nagai Y."/>
            <person name="Sakai M."/>
            <person name="Ogura K."/>
            <person name="Otsuka R."/>
            <person name="Nakazawa H."/>
            <person name="Takamiya M."/>
            <person name="Ohfuku Y."/>
            <person name="Funahashi T."/>
            <person name="Tanaka T."/>
            <person name="Kudoh Y."/>
            <person name="Yamazaki J."/>
            <person name="Kushida N."/>
            <person name="Oguchi A."/>
            <person name="Aoki K."/>
            <person name="Yoshizawa T."/>
            <person name="Nakamura Y."/>
            <person name="Robb F.T."/>
            <person name="Horikoshi K."/>
            <person name="Masuchi Y."/>
            <person name="Shizuya H."/>
            <person name="Kikuchi H."/>
        </authorList>
    </citation>
    <scope>NUCLEOTIDE SEQUENCE [LARGE SCALE GENOMIC DNA]</scope>
    <source>
        <strain>ATCC 700860 / DSM 12428 / JCM 9974 / NBRC 100139 / OT-3</strain>
    </source>
</reference>
<reference key="2">
    <citation type="journal article" date="2004" name="J. Biochem.">
        <title>Oxidative stress response in an anaerobic hyperthermophilic archaeon: presence of a functional peroxiredoxin in Pyrococcus horikoshii.</title>
        <authorList>
            <person name="Kawakami R."/>
            <person name="Sakuraba H."/>
            <person name="Kamohara S."/>
            <person name="Goda S."/>
            <person name="Kawarabayasi Y."/>
            <person name="Ohshima T."/>
        </authorList>
    </citation>
    <scope>PROTEIN SEQUENCE OF 2-26</scope>
    <scope>CATALYTIC ACTIVITY</scope>
    <scope>FUNCTION</scope>
    <scope>INDUCTION BY OXYGEN</scope>
    <scope>BIOPHYSICOCHEMICAL PROPERTIES</scope>
    <source>
        <strain>ATCC 700860 / DSM 12428 / JCM 9974 / NBRC 100139 / OT-3</strain>
    </source>
</reference>
<reference key="3">
    <citation type="journal article" date="2003" name="J. Biochem.">
        <title>Alkyl hydroperoxide reductase dependent on thioredoxin-like protein from Pyrococcus horikoshii.</title>
        <authorList>
            <person name="Kashima Y."/>
            <person name="Ishikawa K."/>
        </authorList>
    </citation>
    <scope>CATALYTIC ACTIVITY</scope>
    <scope>FUNCTION</scope>
    <scope>INDUCTION</scope>
</reference>
<reference key="4">
    <citation type="journal article" date="2013" name="Acta Crystallogr. F">
        <title>Structure of peroxiredoxin from the anaerobic hyperthermophilic archaeon Pyrococcus horikoshii.</title>
        <authorList>
            <person name="Nakamura T."/>
            <person name="Mori A."/>
            <person name="Niiyama M."/>
            <person name="Matsumura H."/>
            <person name="Tokuyama C."/>
            <person name="Morita J."/>
            <person name="Uegaki K."/>
            <person name="Inoue T."/>
        </authorList>
    </citation>
    <scope>X-RAY CRYSTALLOGRAPHY (2.25 ANGSTROMS)</scope>
    <scope>SUBUNIT</scope>
    <source>
        <strain>ATCC 700860 / DSM 12428 / JCM 9974 / NBRC 100139 / OT-3</strain>
    </source>
</reference>
<proteinExistence type="evidence at protein level"/>
<feature type="initiator methionine" description="Removed" evidence="4">
    <location>
        <position position="1"/>
    </location>
</feature>
<feature type="chain" id="PRO_0000135165" description="Peroxiredoxin">
    <location>
        <begin position="2"/>
        <end position="216"/>
    </location>
</feature>
<feature type="domain" description="Thioredoxin" evidence="2">
    <location>
        <begin position="2"/>
        <end position="158"/>
    </location>
</feature>
<feature type="active site" description="Cysteine sulfenic acid (-SOH) intermediate" evidence="2 5">
    <location>
        <position position="46"/>
    </location>
</feature>
<feature type="binding site" evidence="2">
    <location>
        <position position="121"/>
    </location>
    <ligand>
        <name>substrate</name>
    </ligand>
</feature>
<feature type="disulfide bond" description="Interchain (with C-211); in linked form" evidence="2">
    <location>
        <position position="46"/>
    </location>
</feature>
<feature type="disulfide bond" description="Alternate" evidence="2">
    <location>
        <begin position="205"/>
        <end position="211"/>
    </location>
</feature>
<feature type="disulfide bond" description="Interchain (with C-46); in linked form" evidence="2">
    <location>
        <position position="211"/>
    </location>
</feature>
<feature type="strand" evidence="8">
    <location>
        <begin position="11"/>
        <end position="15"/>
    </location>
</feature>
<feature type="strand" evidence="8">
    <location>
        <begin position="18"/>
        <end position="22"/>
    </location>
</feature>
<feature type="helix" evidence="8">
    <location>
        <begin position="24"/>
        <end position="27"/>
    </location>
</feature>
<feature type="turn" evidence="8">
    <location>
        <begin position="28"/>
        <end position="30"/>
    </location>
</feature>
<feature type="strand" evidence="8">
    <location>
        <begin position="32"/>
        <end position="37"/>
    </location>
</feature>
<feature type="helix" evidence="8">
    <location>
        <begin position="44"/>
        <end position="54"/>
    </location>
</feature>
<feature type="helix" evidence="8">
    <location>
        <begin position="57"/>
        <end position="62"/>
    </location>
</feature>
<feature type="strand" evidence="8">
    <location>
        <begin position="65"/>
        <end position="73"/>
    </location>
</feature>
<feature type="helix" evidence="8">
    <location>
        <begin position="75"/>
        <end position="89"/>
    </location>
</feature>
<feature type="strand" evidence="8">
    <location>
        <begin position="97"/>
        <end position="99"/>
    </location>
</feature>
<feature type="helix" evidence="7">
    <location>
        <begin position="101"/>
        <end position="103"/>
    </location>
</feature>
<feature type="helix" evidence="8">
    <location>
        <begin position="104"/>
        <end position="108"/>
    </location>
</feature>
<feature type="strand" evidence="8">
    <location>
        <begin position="121"/>
        <end position="126"/>
    </location>
</feature>
<feature type="strand" evidence="8">
    <location>
        <begin position="130"/>
        <end position="138"/>
    </location>
</feature>
<feature type="helix" evidence="8">
    <location>
        <begin position="146"/>
        <end position="162"/>
    </location>
</feature>
<feature type="turn" evidence="8">
    <location>
        <begin position="168"/>
        <end position="171"/>
    </location>
</feature>
<feature type="turn" evidence="8">
    <location>
        <begin position="174"/>
        <end position="176"/>
    </location>
</feature>
<feature type="strand" evidence="6">
    <location>
        <begin position="180"/>
        <end position="182"/>
    </location>
</feature>
<feature type="helix" evidence="8">
    <location>
        <begin position="188"/>
        <end position="199"/>
    </location>
</feature>
<feature type="strand" evidence="8">
    <location>
        <begin position="204"/>
        <end position="207"/>
    </location>
</feature>
<feature type="strand" evidence="8">
    <location>
        <begin position="210"/>
        <end position="213"/>
    </location>
</feature>
<name>TDXH_PYRHO</name>
<accession>O58966</accession>
<keyword id="KW-0002">3D-structure</keyword>
<keyword id="KW-0049">Antioxidant</keyword>
<keyword id="KW-0963">Cytoplasm</keyword>
<keyword id="KW-0903">Direct protein sequencing</keyword>
<keyword id="KW-1015">Disulfide bond</keyword>
<keyword id="KW-0560">Oxidoreductase</keyword>
<keyword id="KW-0575">Peroxidase</keyword>
<keyword id="KW-0676">Redox-active center</keyword>
<dbReference type="EC" id="1.11.1.24" evidence="2 3 4"/>
<dbReference type="EMBL" id="BA000001">
    <property type="protein sequence ID" value="BAA30317.1"/>
    <property type="molecule type" value="Genomic_DNA"/>
</dbReference>
<dbReference type="PIR" id="C71065">
    <property type="entry name" value="C71065"/>
</dbReference>
<dbReference type="RefSeq" id="WP_010885304.1">
    <property type="nucleotide sequence ID" value="NC_000961.1"/>
</dbReference>
<dbReference type="PDB" id="3W6G">
    <property type="method" value="X-ray"/>
    <property type="resolution" value="2.25 A"/>
    <property type="chains" value="A/B/C/D/E/F/G/H/I/J/K/L/M/N/O/P/Q/R/S/T=1-216"/>
</dbReference>
<dbReference type="PDB" id="5XBQ">
    <property type="method" value="X-ray"/>
    <property type="resolution" value="2.25 A"/>
    <property type="chains" value="A/B/C/D/E/F/G/H/I/J/K/L=1-216"/>
</dbReference>
<dbReference type="PDB" id="5XBR">
    <property type="method" value="X-ray"/>
    <property type="resolution" value="2.10 A"/>
    <property type="chains" value="A/B=1-216"/>
</dbReference>
<dbReference type="PDB" id="6IU1">
    <property type="method" value="X-ray"/>
    <property type="resolution" value="2.89 A"/>
    <property type="chains" value="A/B/C/D/E/F/G/H/I/J/K/L/M/N/O/P/Q/R/S/T=1-216"/>
</dbReference>
<dbReference type="PDBsum" id="3W6G"/>
<dbReference type="PDBsum" id="5XBQ"/>
<dbReference type="PDBsum" id="5XBR"/>
<dbReference type="PDBsum" id="6IU1"/>
<dbReference type="SMR" id="O58966"/>
<dbReference type="STRING" id="70601.gene:9378179"/>
<dbReference type="EnsemblBacteria" id="BAA30317">
    <property type="protein sequence ID" value="BAA30317"/>
    <property type="gene ID" value="BAA30317"/>
</dbReference>
<dbReference type="GeneID" id="1443539"/>
<dbReference type="KEGG" id="pho:PH1217"/>
<dbReference type="eggNOG" id="arCOG00312">
    <property type="taxonomic scope" value="Archaea"/>
</dbReference>
<dbReference type="OrthoDB" id="6924at2157"/>
<dbReference type="BRENDA" id="1.11.1.24">
    <property type="organism ID" value="5244"/>
</dbReference>
<dbReference type="EvolutionaryTrace" id="O58966"/>
<dbReference type="Proteomes" id="UP000000752">
    <property type="component" value="Chromosome"/>
</dbReference>
<dbReference type="GO" id="GO:0005829">
    <property type="term" value="C:cytosol"/>
    <property type="evidence" value="ECO:0007669"/>
    <property type="project" value="TreeGrafter"/>
</dbReference>
<dbReference type="GO" id="GO:0016209">
    <property type="term" value="F:antioxidant activity"/>
    <property type="evidence" value="ECO:0000314"/>
    <property type="project" value="UniProtKB"/>
</dbReference>
<dbReference type="GO" id="GO:0051920">
    <property type="term" value="F:peroxiredoxin activity"/>
    <property type="evidence" value="ECO:0000314"/>
    <property type="project" value="UniProtKB"/>
</dbReference>
<dbReference type="GO" id="GO:0008379">
    <property type="term" value="F:thioredoxin peroxidase activity"/>
    <property type="evidence" value="ECO:0007669"/>
    <property type="project" value="TreeGrafter"/>
</dbReference>
<dbReference type="GO" id="GO:0045454">
    <property type="term" value="P:cell redox homeostasis"/>
    <property type="evidence" value="ECO:0007669"/>
    <property type="project" value="TreeGrafter"/>
</dbReference>
<dbReference type="GO" id="GO:0071453">
    <property type="term" value="P:cellular response to oxygen levels"/>
    <property type="evidence" value="ECO:0000314"/>
    <property type="project" value="UniProtKB"/>
</dbReference>
<dbReference type="GO" id="GO:0033554">
    <property type="term" value="P:cellular response to stress"/>
    <property type="evidence" value="ECO:0007669"/>
    <property type="project" value="TreeGrafter"/>
</dbReference>
<dbReference type="GO" id="GO:0042744">
    <property type="term" value="P:hydrogen peroxide catabolic process"/>
    <property type="evidence" value="ECO:0007669"/>
    <property type="project" value="TreeGrafter"/>
</dbReference>
<dbReference type="GO" id="GO:0006979">
    <property type="term" value="P:response to oxidative stress"/>
    <property type="evidence" value="ECO:0007669"/>
    <property type="project" value="TreeGrafter"/>
</dbReference>
<dbReference type="CDD" id="cd03016">
    <property type="entry name" value="PRX_1cys"/>
    <property type="match status" value="1"/>
</dbReference>
<dbReference type="FunFam" id="3.30.1020.10:FF:000002">
    <property type="entry name" value="Peroxiredoxin"/>
    <property type="match status" value="1"/>
</dbReference>
<dbReference type="FunFam" id="3.40.30.10:FF:000011">
    <property type="entry name" value="Peroxiredoxin PRX1"/>
    <property type="match status" value="1"/>
</dbReference>
<dbReference type="Gene3D" id="3.30.1020.10">
    <property type="entry name" value="Antioxidant, Horf6, Chain A, domain2"/>
    <property type="match status" value="1"/>
</dbReference>
<dbReference type="Gene3D" id="3.40.30.10">
    <property type="entry name" value="Glutaredoxin"/>
    <property type="match status" value="1"/>
</dbReference>
<dbReference type="HAMAP" id="MF_00401">
    <property type="entry name" value="Peroxiredoxin"/>
    <property type="match status" value="1"/>
</dbReference>
<dbReference type="InterPro" id="IPR000866">
    <property type="entry name" value="AhpC/TSA"/>
</dbReference>
<dbReference type="InterPro" id="IPR050217">
    <property type="entry name" value="Peroxiredoxin"/>
</dbReference>
<dbReference type="InterPro" id="IPR024706">
    <property type="entry name" value="Peroxiredoxin_AhpC-typ"/>
</dbReference>
<dbReference type="InterPro" id="IPR019479">
    <property type="entry name" value="Peroxiredoxin_C"/>
</dbReference>
<dbReference type="InterPro" id="IPR022915">
    <property type="entry name" value="Peroxiredoxin_TDXH"/>
</dbReference>
<dbReference type="InterPro" id="IPR045020">
    <property type="entry name" value="PRX_1cys"/>
</dbReference>
<dbReference type="InterPro" id="IPR036249">
    <property type="entry name" value="Thioredoxin-like_sf"/>
</dbReference>
<dbReference type="InterPro" id="IPR013766">
    <property type="entry name" value="Thioredoxin_domain"/>
</dbReference>
<dbReference type="NCBIfam" id="NF009668">
    <property type="entry name" value="PRK13189.1"/>
    <property type="match status" value="1"/>
</dbReference>
<dbReference type="PANTHER" id="PTHR10681">
    <property type="entry name" value="THIOREDOXIN PEROXIDASE"/>
    <property type="match status" value="1"/>
</dbReference>
<dbReference type="PANTHER" id="PTHR10681:SF128">
    <property type="entry name" value="THIOREDOXIN-DEPENDENT PEROXIDE REDUCTASE, MITOCHONDRIAL"/>
    <property type="match status" value="1"/>
</dbReference>
<dbReference type="Pfam" id="PF10417">
    <property type="entry name" value="1-cysPrx_C"/>
    <property type="match status" value="1"/>
</dbReference>
<dbReference type="Pfam" id="PF00578">
    <property type="entry name" value="AhpC-TSA"/>
    <property type="match status" value="1"/>
</dbReference>
<dbReference type="PIRSF" id="PIRSF000239">
    <property type="entry name" value="AHPC"/>
    <property type="match status" value="1"/>
</dbReference>
<dbReference type="SUPFAM" id="SSF52833">
    <property type="entry name" value="Thioredoxin-like"/>
    <property type="match status" value="1"/>
</dbReference>
<dbReference type="PROSITE" id="PS51352">
    <property type="entry name" value="THIOREDOXIN_2"/>
    <property type="match status" value="1"/>
</dbReference>
<organism>
    <name type="scientific">Pyrococcus horikoshii (strain ATCC 700860 / DSM 12428 / JCM 9974 / NBRC 100139 / OT-3)</name>
    <dbReference type="NCBI Taxonomy" id="70601"/>
    <lineage>
        <taxon>Archaea</taxon>
        <taxon>Methanobacteriati</taxon>
        <taxon>Methanobacteriota</taxon>
        <taxon>Thermococci</taxon>
        <taxon>Thermococcales</taxon>
        <taxon>Thermococcaceae</taxon>
        <taxon>Pyrococcus</taxon>
    </lineage>
</organism>
<sequence>MVVIGEKFPEVEVKTTHGVIKLPDYFTKQGKWFILFSHPADFTPVCTTEFYGMQKRVEEFRKLGVEPIGLSVDQVFSHIKWIEWIKDNLSVEIDFPVIADDRGELAEKLGMIPSGATITARAVFVVDDKGIIRAIVYYPAEVGRDWDEILRLVKALKISTEKGVALPHKWPNNELIGDKVIVPPASTIEEKKQREEAKAKGEIECYDWWFCYKKLE</sequence>
<gene>
    <name type="primary">ahpC</name>
    <name type="ordered locus">PH1217</name>
</gene>
<protein>
    <recommendedName>
        <fullName evidence="2">Peroxiredoxin</fullName>
        <ecNumber evidence="2 3 4">1.11.1.24</ecNumber>
    </recommendedName>
    <alternativeName>
        <fullName evidence="2">Thioredoxin peroxidase</fullName>
    </alternativeName>
    <alternativeName>
        <fullName evidence="2">Thioredoxin-dependent peroxiredoxin</fullName>
    </alternativeName>
</protein>